<proteinExistence type="inferred from homology"/>
<protein>
    <recommendedName>
        <fullName evidence="1">Magnesium-protoporphyrin IX monomethyl ester [oxidative] cyclase</fullName>
        <shortName evidence="1">Mg-protoporphyrin IX monomethyl ester oxidative cyclase</shortName>
        <ecNumber evidence="1">1.14.13.81</ecNumber>
    </recommendedName>
</protein>
<organism>
    <name type="scientific">Trichodesmium erythraeum (strain IMS101)</name>
    <dbReference type="NCBI Taxonomy" id="203124"/>
    <lineage>
        <taxon>Bacteria</taxon>
        <taxon>Bacillati</taxon>
        <taxon>Cyanobacteriota</taxon>
        <taxon>Cyanophyceae</taxon>
        <taxon>Oscillatoriophycideae</taxon>
        <taxon>Oscillatoriales</taxon>
        <taxon>Microcoleaceae</taxon>
        <taxon>Trichodesmium</taxon>
    </lineage>
</organism>
<gene>
    <name evidence="1" type="primary">acsF</name>
    <name type="ordered locus">Tery_0728</name>
</gene>
<dbReference type="EC" id="1.14.13.81" evidence="1"/>
<dbReference type="EMBL" id="CP000393">
    <property type="protein sequence ID" value="ABG50160.1"/>
    <property type="molecule type" value="Genomic_DNA"/>
</dbReference>
<dbReference type="RefSeq" id="WP_011610553.1">
    <property type="nucleotide sequence ID" value="NC_008312.1"/>
</dbReference>
<dbReference type="STRING" id="203124.Tery_0728"/>
<dbReference type="KEGG" id="ter:Tery_0728"/>
<dbReference type="eggNOG" id="COG1633">
    <property type="taxonomic scope" value="Bacteria"/>
</dbReference>
<dbReference type="HOGENOM" id="CLU_048037_0_0_3"/>
<dbReference type="OrthoDB" id="141643at2"/>
<dbReference type="UniPathway" id="UPA00670"/>
<dbReference type="GO" id="GO:0005506">
    <property type="term" value="F:iron ion binding"/>
    <property type="evidence" value="ECO:0007669"/>
    <property type="project" value="UniProtKB-UniRule"/>
</dbReference>
<dbReference type="GO" id="GO:0048529">
    <property type="term" value="F:magnesium-protoporphyrin IX monomethyl ester (oxidative) cyclase activity"/>
    <property type="evidence" value="ECO:0007669"/>
    <property type="project" value="UniProtKB-UniRule"/>
</dbReference>
<dbReference type="GO" id="GO:0036068">
    <property type="term" value="P:light-independent chlorophyll biosynthetic process"/>
    <property type="evidence" value="ECO:0007669"/>
    <property type="project" value="UniProtKB-UniRule"/>
</dbReference>
<dbReference type="GO" id="GO:0015979">
    <property type="term" value="P:photosynthesis"/>
    <property type="evidence" value="ECO:0007669"/>
    <property type="project" value="UniProtKB-UniRule"/>
</dbReference>
<dbReference type="CDD" id="cd01047">
    <property type="entry name" value="ACSF"/>
    <property type="match status" value="1"/>
</dbReference>
<dbReference type="HAMAP" id="MF_01840">
    <property type="entry name" value="AcsF"/>
    <property type="match status" value="1"/>
</dbReference>
<dbReference type="InterPro" id="IPR008434">
    <property type="entry name" value="AcsF"/>
</dbReference>
<dbReference type="InterPro" id="IPR009078">
    <property type="entry name" value="Ferritin-like_SF"/>
</dbReference>
<dbReference type="InterPro" id="IPR003251">
    <property type="entry name" value="Rr_diiron-bd_dom"/>
</dbReference>
<dbReference type="NCBIfam" id="TIGR02029">
    <property type="entry name" value="AcsF"/>
    <property type="match status" value="1"/>
</dbReference>
<dbReference type="NCBIfam" id="NF010172">
    <property type="entry name" value="PRK13654.1"/>
    <property type="match status" value="1"/>
</dbReference>
<dbReference type="PANTHER" id="PTHR31053">
    <property type="entry name" value="MAGNESIUM-PROTOPORPHYRIN IX MONOMETHYL ESTER [OXIDATIVE] CYCLASE, CHLOROPLASTIC"/>
    <property type="match status" value="1"/>
</dbReference>
<dbReference type="PANTHER" id="PTHR31053:SF2">
    <property type="entry name" value="MAGNESIUM-PROTOPORPHYRIN IX MONOMETHYL ESTER [OXIDATIVE] CYCLASE, CHLOROPLASTIC"/>
    <property type="match status" value="1"/>
</dbReference>
<dbReference type="Pfam" id="PF02915">
    <property type="entry name" value="Rubrerythrin"/>
    <property type="match status" value="1"/>
</dbReference>
<dbReference type="SUPFAM" id="SSF47240">
    <property type="entry name" value="Ferritin-like"/>
    <property type="match status" value="1"/>
</dbReference>
<evidence type="ECO:0000255" key="1">
    <source>
        <dbReference type="HAMAP-Rule" id="MF_01840"/>
    </source>
</evidence>
<comment type="function">
    <text evidence="1">Catalyzes the formation of the isocyclic ring in chlorophyll biosynthesis. Mediates the cyclase reaction, which results in the formation of divinylprotochlorophyllide (Pchlide) characteristic of all chlorophylls from magnesium-protoporphyrin IX 13-monomethyl ester (MgPMME).</text>
</comment>
<comment type="catalytic activity">
    <reaction evidence="1">
        <text>Mg-protoporphyrin IX 13-monomethyl ester + 3 NADPH + 3 O2 + 2 H(+) = 3,8-divinyl protochlorophyllide a + 3 NADP(+) + 5 H2O</text>
        <dbReference type="Rhea" id="RHEA:33235"/>
        <dbReference type="ChEBI" id="CHEBI:15377"/>
        <dbReference type="ChEBI" id="CHEBI:15378"/>
        <dbReference type="ChEBI" id="CHEBI:15379"/>
        <dbReference type="ChEBI" id="CHEBI:57783"/>
        <dbReference type="ChEBI" id="CHEBI:58349"/>
        <dbReference type="ChEBI" id="CHEBI:58632"/>
        <dbReference type="ChEBI" id="CHEBI:60491"/>
        <dbReference type="EC" id="1.14.13.81"/>
    </reaction>
</comment>
<comment type="cofactor">
    <cofactor evidence="1">
        <name>Fe cation</name>
        <dbReference type="ChEBI" id="CHEBI:24875"/>
    </cofactor>
</comment>
<comment type="pathway">
    <text evidence="1">Porphyrin-containing compound metabolism; chlorophyll biosynthesis (light-independent).</text>
</comment>
<comment type="similarity">
    <text evidence="1">Belongs to the AcsF family.</text>
</comment>
<accession>Q118B4</accession>
<name>ACSF_TRIEI</name>
<sequence length="358" mass="42736">MVNSLKKQTFTEMRPGVKVPAKETILTPRFYTTDFDEMAKMDISVNEDELMAILEEFRADYNRHHFVRNEEFAQSWDHIDGETRRLFVEFLERSCTAEFSGFLLYKELGRRLKNKSPILAECFTLMSRDEARHAGFLNKAMSDFNLSLDLGFLTKSRKYTFFKPKFIFYATYLSEKIGYWRYITIYRHLEAHPEDRIYPIFRFFENWCQDENRHGDFFDAIMRARPEFLNDWQAKLWCRFFLLSVFATMYLNDIQRADFYASIGLNACDYDKYVIEKTNETSGRVFPVILDVENPEFYARLEFCIKNNEKLTKIANSNNPGFVKFFQKFPLYLSNGWQFLKLYLMKPIETATMQSSVR</sequence>
<keyword id="KW-0149">Chlorophyll biosynthesis</keyword>
<keyword id="KW-0408">Iron</keyword>
<keyword id="KW-0479">Metal-binding</keyword>
<keyword id="KW-0521">NADP</keyword>
<keyword id="KW-0560">Oxidoreductase</keyword>
<keyword id="KW-0602">Photosynthesis</keyword>
<feature type="chain" id="PRO_1000070557" description="Magnesium-protoporphyrin IX monomethyl ester [oxidative] cyclase">
    <location>
        <begin position="1"/>
        <end position="358"/>
    </location>
</feature>
<reference key="1">
    <citation type="journal article" date="2015" name="Proc. Natl. Acad. Sci. U.S.A.">
        <title>Trichodesmium genome maintains abundant, widespread noncoding DNA in situ, despite oligotrophic lifestyle.</title>
        <authorList>
            <person name="Walworth N."/>
            <person name="Pfreundt U."/>
            <person name="Nelson W.C."/>
            <person name="Mincer T."/>
            <person name="Heidelberg J.F."/>
            <person name="Fu F."/>
            <person name="Waterbury J.B."/>
            <person name="Glavina del Rio T."/>
            <person name="Goodwin L."/>
            <person name="Kyrpides N.C."/>
            <person name="Land M.L."/>
            <person name="Woyke T."/>
            <person name="Hutchins D.A."/>
            <person name="Hess W.R."/>
            <person name="Webb E.A."/>
        </authorList>
    </citation>
    <scope>NUCLEOTIDE SEQUENCE [LARGE SCALE GENOMIC DNA]</scope>
    <source>
        <strain>IMS101</strain>
    </source>
</reference>